<keyword id="KW-0051">Antiviral defense</keyword>
<keyword id="KW-0202">Cytokine</keyword>
<keyword id="KW-1015">Disulfide bond</keyword>
<keyword id="KW-0325">Glycoprotein</keyword>
<keyword id="KW-1185">Reference proteome</keyword>
<keyword id="KW-0964">Secreted</keyword>
<keyword id="KW-0732">Signal</keyword>
<organism>
    <name type="scientific">Sus scrofa</name>
    <name type="common">Pig</name>
    <dbReference type="NCBI Taxonomy" id="9823"/>
    <lineage>
        <taxon>Eukaryota</taxon>
        <taxon>Metazoa</taxon>
        <taxon>Chordata</taxon>
        <taxon>Craniata</taxon>
        <taxon>Vertebrata</taxon>
        <taxon>Euteleostomi</taxon>
        <taxon>Mammalia</taxon>
        <taxon>Eutheria</taxon>
        <taxon>Laurasiatheria</taxon>
        <taxon>Artiodactyla</taxon>
        <taxon>Suina</taxon>
        <taxon>Suidae</taxon>
        <taxon>Sus</taxon>
    </lineage>
</organism>
<comment type="function">
    <text evidence="1">Type I interferon required for maintaining basal levels of IFN-regulated genes, including 2'-5'-oligoadenylate synthetase, IRF7 and ISG15, in the female reproductive tract. Directly mediates protection against viral and bacterial genital infections (By similarity).</text>
</comment>
<comment type="subcellular location">
    <subcellularLocation>
        <location evidence="3">Secreted</location>
    </subcellularLocation>
</comment>
<comment type="similarity">
    <text evidence="3">Belongs to the alpha/beta interferon family.</text>
</comment>
<feature type="signal peptide" evidence="2">
    <location>
        <begin position="1"/>
        <end position="21"/>
    </location>
</feature>
<feature type="chain" id="PRO_0000317633" description="Interferon epsilon">
    <location>
        <begin position="22"/>
        <end position="193"/>
    </location>
</feature>
<feature type="glycosylation site" description="N-linked (GlcNAc...) asparagine" evidence="2">
    <location>
        <position position="139"/>
    </location>
</feature>
<feature type="disulfide bond" evidence="1">
    <location>
        <begin position="53"/>
        <end position="163"/>
    </location>
</feature>
<dbReference type="EMBL" id="EU072421">
    <property type="protein sequence ID" value="ABU49642.1"/>
    <property type="molecule type" value="mRNA"/>
</dbReference>
<dbReference type="RefSeq" id="NP_001098780.1">
    <property type="nucleotide sequence ID" value="NM_001105310.1"/>
</dbReference>
<dbReference type="RefSeq" id="XP_005660117.1">
    <property type="nucleotide sequence ID" value="XM_005660060.3"/>
</dbReference>
<dbReference type="SMR" id="A7UHZ5"/>
<dbReference type="FunCoup" id="A7UHZ5">
    <property type="interactions" value="46"/>
</dbReference>
<dbReference type="STRING" id="9823.ENSSSCP00000005523"/>
<dbReference type="GlyCosmos" id="A7UHZ5">
    <property type="glycosylation" value="1 site, No reported glycans"/>
</dbReference>
<dbReference type="GlyGen" id="A7UHZ5">
    <property type="glycosylation" value="1 site"/>
</dbReference>
<dbReference type="PaxDb" id="9823-ENSSSCP00000005523"/>
<dbReference type="Ensembl" id="ENSSSCT00000005664.3">
    <property type="protein sequence ID" value="ENSSSCP00000005523.1"/>
    <property type="gene ID" value="ENSSSCG00000005136.3"/>
</dbReference>
<dbReference type="Ensembl" id="ENSSSCT00025052699.1">
    <property type="protein sequence ID" value="ENSSSCP00025022465.1"/>
    <property type="gene ID" value="ENSSSCG00025038786.1"/>
</dbReference>
<dbReference type="Ensembl" id="ENSSSCT00035057690.1">
    <property type="protein sequence ID" value="ENSSSCP00035023174.1"/>
    <property type="gene ID" value="ENSSSCG00035043430.1"/>
</dbReference>
<dbReference type="Ensembl" id="ENSSSCT00045006432.1">
    <property type="protein sequence ID" value="ENSSSCP00045004372.1"/>
    <property type="gene ID" value="ENSSSCG00045003884.1"/>
</dbReference>
<dbReference type="Ensembl" id="ENSSSCT00065026654.1">
    <property type="protein sequence ID" value="ENSSSCP00065010955.1"/>
    <property type="gene ID" value="ENSSSCG00065020010.1"/>
</dbReference>
<dbReference type="Ensembl" id="ENSSSCT00110023652">
    <property type="protein sequence ID" value="ENSSSCP00110016020"/>
    <property type="gene ID" value="ENSSSCG00110012314"/>
</dbReference>
<dbReference type="Ensembl" id="ENSSSCT00110023660">
    <property type="protein sequence ID" value="ENSSSCP00110016026"/>
    <property type="gene ID" value="ENSSSCG00110012314"/>
</dbReference>
<dbReference type="Ensembl" id="ENSSSCT00115020424">
    <property type="protein sequence ID" value="ENSSSCP00115019348"/>
    <property type="gene ID" value="ENSSSCG00115011826"/>
</dbReference>
<dbReference type="Ensembl" id="ENSSSCT00130056445">
    <property type="protein sequence ID" value="ENSSSCP00130040435"/>
    <property type="gene ID" value="ENSSSCG00130028948"/>
</dbReference>
<dbReference type="Ensembl" id="ENSSSCT00130056463">
    <property type="protein sequence ID" value="ENSSSCP00130040450"/>
    <property type="gene ID" value="ENSSSCG00130028948"/>
</dbReference>
<dbReference type="GeneID" id="100125969"/>
<dbReference type="KEGG" id="ssc:100125969"/>
<dbReference type="CTD" id="338376"/>
<dbReference type="VGNC" id="VGNC:89039">
    <property type="gene designation" value="IFNE"/>
</dbReference>
<dbReference type="eggNOG" id="ENOG502S65R">
    <property type="taxonomic scope" value="Eukaryota"/>
</dbReference>
<dbReference type="GeneTree" id="ENSGT01000000214430"/>
<dbReference type="HOGENOM" id="CLU_109427_1_0_1"/>
<dbReference type="InParanoid" id="A7UHZ5"/>
<dbReference type="OMA" id="QQCLPHR"/>
<dbReference type="OrthoDB" id="8922121at2759"/>
<dbReference type="TreeFam" id="TF336177"/>
<dbReference type="Proteomes" id="UP000008227">
    <property type="component" value="Chromosome 1"/>
</dbReference>
<dbReference type="Proteomes" id="UP000314985">
    <property type="component" value="Unplaced"/>
</dbReference>
<dbReference type="Proteomes" id="UP000694570">
    <property type="component" value="Unplaced"/>
</dbReference>
<dbReference type="Proteomes" id="UP000694571">
    <property type="component" value="Unplaced"/>
</dbReference>
<dbReference type="Proteomes" id="UP000694720">
    <property type="component" value="Unplaced"/>
</dbReference>
<dbReference type="Proteomes" id="UP000694722">
    <property type="component" value="Unplaced"/>
</dbReference>
<dbReference type="Proteomes" id="UP000694723">
    <property type="component" value="Unplaced"/>
</dbReference>
<dbReference type="Proteomes" id="UP000694724">
    <property type="component" value="Unplaced"/>
</dbReference>
<dbReference type="Proteomes" id="UP000694725">
    <property type="component" value="Unplaced"/>
</dbReference>
<dbReference type="Proteomes" id="UP000694726">
    <property type="component" value="Unplaced"/>
</dbReference>
<dbReference type="Proteomes" id="UP000694727">
    <property type="component" value="Unplaced"/>
</dbReference>
<dbReference type="Proteomes" id="UP000694728">
    <property type="component" value="Unplaced"/>
</dbReference>
<dbReference type="Bgee" id="ENSSSCG00000005136">
    <property type="expression patterns" value="Expressed in granulosa cell and 9 other cell types or tissues"/>
</dbReference>
<dbReference type="ExpressionAtlas" id="A7UHZ5">
    <property type="expression patterns" value="baseline"/>
</dbReference>
<dbReference type="GO" id="GO:0005615">
    <property type="term" value="C:extracellular space"/>
    <property type="evidence" value="ECO:0000318"/>
    <property type="project" value="GO_Central"/>
</dbReference>
<dbReference type="GO" id="GO:0005125">
    <property type="term" value="F:cytokine activity"/>
    <property type="evidence" value="ECO:0000318"/>
    <property type="project" value="GO_Central"/>
</dbReference>
<dbReference type="GO" id="GO:0005132">
    <property type="term" value="F:type I interferon receptor binding"/>
    <property type="evidence" value="ECO:0000318"/>
    <property type="project" value="GO_Central"/>
</dbReference>
<dbReference type="GO" id="GO:0002250">
    <property type="term" value="P:adaptive immune response"/>
    <property type="evidence" value="ECO:0000318"/>
    <property type="project" value="GO_Central"/>
</dbReference>
<dbReference type="GO" id="GO:0002312">
    <property type="term" value="P:B cell activation involved in immune response"/>
    <property type="evidence" value="ECO:0000318"/>
    <property type="project" value="GO_Central"/>
</dbReference>
<dbReference type="GO" id="GO:0042742">
    <property type="term" value="P:defense response to bacterium"/>
    <property type="evidence" value="ECO:0000250"/>
    <property type="project" value="UniProtKB"/>
</dbReference>
<dbReference type="GO" id="GO:0051607">
    <property type="term" value="P:defense response to virus"/>
    <property type="evidence" value="ECO:0000250"/>
    <property type="project" value="UniProtKB"/>
</dbReference>
<dbReference type="GO" id="GO:0006959">
    <property type="term" value="P:humoral immune response"/>
    <property type="evidence" value="ECO:0000318"/>
    <property type="project" value="GO_Central"/>
</dbReference>
<dbReference type="GO" id="GO:0002323">
    <property type="term" value="P:natural killer cell activation involved in immune response"/>
    <property type="evidence" value="ECO:0000318"/>
    <property type="project" value="GO_Central"/>
</dbReference>
<dbReference type="GO" id="GO:0043330">
    <property type="term" value="P:response to exogenous dsRNA"/>
    <property type="evidence" value="ECO:0000318"/>
    <property type="project" value="GO_Central"/>
</dbReference>
<dbReference type="GO" id="GO:0002286">
    <property type="term" value="P:T cell activation involved in immune response"/>
    <property type="evidence" value="ECO:0000318"/>
    <property type="project" value="GO_Central"/>
</dbReference>
<dbReference type="GO" id="GO:0060337">
    <property type="term" value="P:type I interferon-mediated signaling pathway"/>
    <property type="evidence" value="ECO:0000318"/>
    <property type="project" value="GO_Central"/>
</dbReference>
<dbReference type="FunFam" id="1.20.1250.10:FF:000033">
    <property type="entry name" value="Interferon epsilon"/>
    <property type="match status" value="1"/>
</dbReference>
<dbReference type="Gene3D" id="1.20.1250.10">
    <property type="match status" value="1"/>
</dbReference>
<dbReference type="InterPro" id="IPR009079">
    <property type="entry name" value="4_helix_cytokine-like_core"/>
</dbReference>
<dbReference type="InterPro" id="IPR000471">
    <property type="entry name" value="Interferon_alpha/beta/delta"/>
</dbReference>
<dbReference type="PANTHER" id="PTHR11691:SF8">
    <property type="entry name" value="INTERFERON EPSILON"/>
    <property type="match status" value="1"/>
</dbReference>
<dbReference type="PANTHER" id="PTHR11691">
    <property type="entry name" value="TYPE I INTERFERON"/>
    <property type="match status" value="1"/>
</dbReference>
<dbReference type="Pfam" id="PF00143">
    <property type="entry name" value="Interferon"/>
    <property type="match status" value="1"/>
</dbReference>
<dbReference type="PRINTS" id="PR00266">
    <property type="entry name" value="INTERFERONAB"/>
</dbReference>
<dbReference type="SMART" id="SM00076">
    <property type="entry name" value="IFabd"/>
    <property type="match status" value="1"/>
</dbReference>
<dbReference type="SUPFAM" id="SSF47266">
    <property type="entry name" value="4-helical cytokines"/>
    <property type="match status" value="1"/>
</dbReference>
<dbReference type="PROSITE" id="PS00252">
    <property type="entry name" value="INTERFERON_A_B_D"/>
    <property type="match status" value="1"/>
</dbReference>
<accession>A7UHZ5</accession>
<protein>
    <recommendedName>
        <fullName>Interferon epsilon</fullName>
        <shortName>IFN-epsilon</shortName>
    </recommendedName>
    <alternativeName>
        <fullName>Interferon epsilon-1</fullName>
    </alternativeName>
</protein>
<sequence>MINKSFFEIMLVLLASSTGFSRELKLVLSQQRRVNRESLKLLNKLQTSSIQQCLPHRKNFLLPQKSMNPHQYQKQQALAILHEMLQQIFSLFRAVISLDGWEESHMEEFLVELHQQLEYLEALMRLQAEQKSDTLCSENLTLQVKMYFQRIRDYLENQDYSSCAWTIVRVEINRCLFFVFQLTGKLSKQGMEP</sequence>
<proteinExistence type="evidence at transcript level"/>
<evidence type="ECO:0000250" key="1"/>
<evidence type="ECO:0000255" key="2"/>
<evidence type="ECO:0000305" key="3"/>
<reference key="1">
    <citation type="submission" date="2007-07" db="EMBL/GenBank/DDBJ databases">
        <authorList>
            <person name="Tai Y.-L."/>
            <person name="Wang Y.-L."/>
            <person name="Zhang Z.-Q."/>
            <person name="Han L.-Q."/>
            <person name="Wang W.-J."/>
            <person name="Wang Y.-Y."/>
            <person name="Zhong K."/>
            <person name="Guo Y.-J."/>
            <person name="Zhu H.-S."/>
            <person name="Yang G.-Y."/>
        </authorList>
    </citation>
    <scope>NUCLEOTIDE SEQUENCE [MRNA]</scope>
</reference>
<gene>
    <name type="primary">IFNE</name>
    <name type="synonym">IFNE1</name>
</gene>
<name>IFNE_PIG</name>